<protein>
    <recommendedName>
        <fullName evidence="1">Carbamoyl phosphate synthase large chain</fullName>
        <ecNumber evidence="1">6.3.4.16</ecNumber>
        <ecNumber evidence="1">6.3.5.5</ecNumber>
    </recommendedName>
    <alternativeName>
        <fullName evidence="1">Carbamoyl phosphate synthetase ammonia chain</fullName>
    </alternativeName>
</protein>
<evidence type="ECO:0000255" key="1">
    <source>
        <dbReference type="HAMAP-Rule" id="MF_01210"/>
    </source>
</evidence>
<keyword id="KW-0028">Amino-acid biosynthesis</keyword>
<keyword id="KW-0055">Arginine biosynthesis</keyword>
<keyword id="KW-0067">ATP-binding</keyword>
<keyword id="KW-0436">Ligase</keyword>
<keyword id="KW-0460">Magnesium</keyword>
<keyword id="KW-0464">Manganese</keyword>
<keyword id="KW-0479">Metal-binding</keyword>
<keyword id="KW-0547">Nucleotide-binding</keyword>
<keyword id="KW-0665">Pyrimidine biosynthesis</keyword>
<keyword id="KW-1185">Reference proteome</keyword>
<keyword id="KW-0677">Repeat</keyword>
<organism>
    <name type="scientific">Sulfolobus acidocaldarius (strain ATCC 33909 / DSM 639 / JCM 8929 / NBRC 15157 / NCIMB 11770)</name>
    <dbReference type="NCBI Taxonomy" id="330779"/>
    <lineage>
        <taxon>Archaea</taxon>
        <taxon>Thermoproteota</taxon>
        <taxon>Thermoprotei</taxon>
        <taxon>Sulfolobales</taxon>
        <taxon>Sulfolobaceae</taxon>
        <taxon>Sulfolobus</taxon>
    </lineage>
</organism>
<feature type="chain" id="PRO_0000145083" description="Carbamoyl phosphate synthase large chain">
    <location>
        <begin position="1"/>
        <end position="1052"/>
    </location>
</feature>
<feature type="domain" description="ATP-grasp 1" evidence="1">
    <location>
        <begin position="131"/>
        <end position="325"/>
    </location>
</feature>
<feature type="domain" description="ATP-grasp 2" evidence="1">
    <location>
        <begin position="674"/>
        <end position="864"/>
    </location>
</feature>
<feature type="domain" description="MGS-like" evidence="1">
    <location>
        <begin position="930"/>
        <end position="1052"/>
    </location>
</feature>
<feature type="region of interest" description="Carboxyphosphate synthetic domain" evidence="1">
    <location>
        <begin position="1"/>
        <end position="399"/>
    </location>
</feature>
<feature type="region of interest" description="Oligomerization domain" evidence="1">
    <location>
        <begin position="400"/>
        <end position="548"/>
    </location>
</feature>
<feature type="region of interest" description="Carbamoyl phosphate synthetic domain" evidence="1">
    <location>
        <begin position="549"/>
        <end position="930"/>
    </location>
</feature>
<feature type="region of interest" description="Allosteric domain" evidence="1">
    <location>
        <begin position="931"/>
        <end position="1052"/>
    </location>
</feature>
<feature type="binding site" evidence="1">
    <location>
        <position position="127"/>
    </location>
    <ligand>
        <name>ATP</name>
        <dbReference type="ChEBI" id="CHEBI:30616"/>
        <label>1</label>
    </ligand>
</feature>
<feature type="binding site" evidence="1">
    <location>
        <position position="167"/>
    </location>
    <ligand>
        <name>ATP</name>
        <dbReference type="ChEBI" id="CHEBI:30616"/>
        <label>1</label>
    </ligand>
</feature>
<feature type="binding site" evidence="1">
    <location>
        <position position="173"/>
    </location>
    <ligand>
        <name>ATP</name>
        <dbReference type="ChEBI" id="CHEBI:30616"/>
        <label>1</label>
    </ligand>
</feature>
<feature type="binding site" evidence="1">
    <location>
        <position position="174"/>
    </location>
    <ligand>
        <name>ATP</name>
        <dbReference type="ChEBI" id="CHEBI:30616"/>
        <label>1</label>
    </ligand>
</feature>
<feature type="binding site" evidence="1">
    <location>
        <position position="206"/>
    </location>
    <ligand>
        <name>ATP</name>
        <dbReference type="ChEBI" id="CHEBI:30616"/>
        <label>1</label>
    </ligand>
</feature>
<feature type="binding site" evidence="1">
    <location>
        <position position="208"/>
    </location>
    <ligand>
        <name>ATP</name>
        <dbReference type="ChEBI" id="CHEBI:30616"/>
        <label>1</label>
    </ligand>
</feature>
<feature type="binding site" evidence="1">
    <location>
        <position position="213"/>
    </location>
    <ligand>
        <name>ATP</name>
        <dbReference type="ChEBI" id="CHEBI:30616"/>
        <label>1</label>
    </ligand>
</feature>
<feature type="binding site" evidence="1">
    <location>
        <position position="239"/>
    </location>
    <ligand>
        <name>ATP</name>
        <dbReference type="ChEBI" id="CHEBI:30616"/>
        <label>1</label>
    </ligand>
</feature>
<feature type="binding site" evidence="1">
    <location>
        <position position="240"/>
    </location>
    <ligand>
        <name>ATP</name>
        <dbReference type="ChEBI" id="CHEBI:30616"/>
        <label>1</label>
    </ligand>
</feature>
<feature type="binding site" evidence="1">
    <location>
        <position position="241"/>
    </location>
    <ligand>
        <name>ATP</name>
        <dbReference type="ChEBI" id="CHEBI:30616"/>
        <label>1</label>
    </ligand>
</feature>
<feature type="binding site" evidence="1">
    <location>
        <position position="282"/>
    </location>
    <ligand>
        <name>ATP</name>
        <dbReference type="ChEBI" id="CHEBI:30616"/>
        <label>1</label>
    </ligand>
</feature>
<feature type="binding site" evidence="1">
    <location>
        <position position="282"/>
    </location>
    <ligand>
        <name>Mg(2+)</name>
        <dbReference type="ChEBI" id="CHEBI:18420"/>
        <label>1</label>
    </ligand>
</feature>
<feature type="binding site" evidence="1">
    <location>
        <position position="282"/>
    </location>
    <ligand>
        <name>Mn(2+)</name>
        <dbReference type="ChEBI" id="CHEBI:29035"/>
        <label>1</label>
    </ligand>
</feature>
<feature type="binding site" evidence="1">
    <location>
        <position position="296"/>
    </location>
    <ligand>
        <name>ATP</name>
        <dbReference type="ChEBI" id="CHEBI:30616"/>
        <label>1</label>
    </ligand>
</feature>
<feature type="binding site" evidence="1">
    <location>
        <position position="296"/>
    </location>
    <ligand>
        <name>Mg(2+)</name>
        <dbReference type="ChEBI" id="CHEBI:18420"/>
        <label>1</label>
    </ligand>
</feature>
<feature type="binding site" evidence="1">
    <location>
        <position position="296"/>
    </location>
    <ligand>
        <name>Mg(2+)</name>
        <dbReference type="ChEBI" id="CHEBI:18420"/>
        <label>2</label>
    </ligand>
</feature>
<feature type="binding site" evidence="1">
    <location>
        <position position="296"/>
    </location>
    <ligand>
        <name>Mn(2+)</name>
        <dbReference type="ChEBI" id="CHEBI:29035"/>
        <label>1</label>
    </ligand>
</feature>
<feature type="binding site" evidence="1">
    <location>
        <position position="296"/>
    </location>
    <ligand>
        <name>Mn(2+)</name>
        <dbReference type="ChEBI" id="CHEBI:29035"/>
        <label>2</label>
    </ligand>
</feature>
<feature type="binding site" evidence="1">
    <location>
        <position position="298"/>
    </location>
    <ligand>
        <name>Mg(2+)</name>
        <dbReference type="ChEBI" id="CHEBI:18420"/>
        <label>2</label>
    </ligand>
</feature>
<feature type="binding site" evidence="1">
    <location>
        <position position="298"/>
    </location>
    <ligand>
        <name>Mn(2+)</name>
        <dbReference type="ChEBI" id="CHEBI:29035"/>
        <label>2</label>
    </ligand>
</feature>
<feature type="binding site" evidence="1">
    <location>
        <position position="710"/>
    </location>
    <ligand>
        <name>ATP</name>
        <dbReference type="ChEBI" id="CHEBI:30616"/>
        <label>2</label>
    </ligand>
</feature>
<feature type="binding site" evidence="1">
    <location>
        <position position="749"/>
    </location>
    <ligand>
        <name>ATP</name>
        <dbReference type="ChEBI" id="CHEBI:30616"/>
        <label>2</label>
    </ligand>
</feature>
<feature type="binding site" evidence="1">
    <location>
        <position position="751"/>
    </location>
    <ligand>
        <name>ATP</name>
        <dbReference type="ChEBI" id="CHEBI:30616"/>
        <label>2</label>
    </ligand>
</feature>
<feature type="binding site" evidence="1">
    <location>
        <position position="756"/>
    </location>
    <ligand>
        <name>ATP</name>
        <dbReference type="ChEBI" id="CHEBI:30616"/>
        <label>2</label>
    </ligand>
</feature>
<feature type="binding site" evidence="1">
    <location>
        <position position="780"/>
    </location>
    <ligand>
        <name>ATP</name>
        <dbReference type="ChEBI" id="CHEBI:30616"/>
        <label>2</label>
    </ligand>
</feature>
<feature type="binding site" evidence="1">
    <location>
        <position position="781"/>
    </location>
    <ligand>
        <name>ATP</name>
        <dbReference type="ChEBI" id="CHEBI:30616"/>
        <label>2</label>
    </ligand>
</feature>
<feature type="binding site" evidence="1">
    <location>
        <position position="782"/>
    </location>
    <ligand>
        <name>ATP</name>
        <dbReference type="ChEBI" id="CHEBI:30616"/>
        <label>2</label>
    </ligand>
</feature>
<feature type="binding site" evidence="1">
    <location>
        <position position="783"/>
    </location>
    <ligand>
        <name>ATP</name>
        <dbReference type="ChEBI" id="CHEBI:30616"/>
        <label>2</label>
    </ligand>
</feature>
<feature type="binding site" evidence="1">
    <location>
        <position position="823"/>
    </location>
    <ligand>
        <name>ATP</name>
        <dbReference type="ChEBI" id="CHEBI:30616"/>
        <label>2</label>
    </ligand>
</feature>
<feature type="binding site" evidence="1">
    <location>
        <position position="823"/>
    </location>
    <ligand>
        <name>Mg(2+)</name>
        <dbReference type="ChEBI" id="CHEBI:18420"/>
        <label>3</label>
    </ligand>
</feature>
<feature type="binding site" evidence="1">
    <location>
        <position position="823"/>
    </location>
    <ligand>
        <name>Mn(2+)</name>
        <dbReference type="ChEBI" id="CHEBI:29035"/>
        <label>3</label>
    </ligand>
</feature>
<feature type="binding site" evidence="1">
    <location>
        <position position="835"/>
    </location>
    <ligand>
        <name>ATP</name>
        <dbReference type="ChEBI" id="CHEBI:30616"/>
        <label>2</label>
    </ligand>
</feature>
<feature type="binding site" evidence="1">
    <location>
        <position position="835"/>
    </location>
    <ligand>
        <name>Mg(2+)</name>
        <dbReference type="ChEBI" id="CHEBI:18420"/>
        <label>3</label>
    </ligand>
</feature>
<feature type="binding site" evidence="1">
    <location>
        <position position="835"/>
    </location>
    <ligand>
        <name>Mg(2+)</name>
        <dbReference type="ChEBI" id="CHEBI:18420"/>
        <label>4</label>
    </ligand>
</feature>
<feature type="binding site" evidence="1">
    <location>
        <position position="835"/>
    </location>
    <ligand>
        <name>Mn(2+)</name>
        <dbReference type="ChEBI" id="CHEBI:29035"/>
        <label>3</label>
    </ligand>
</feature>
<feature type="binding site" evidence="1">
    <location>
        <position position="835"/>
    </location>
    <ligand>
        <name>Mn(2+)</name>
        <dbReference type="ChEBI" id="CHEBI:29035"/>
        <label>4</label>
    </ligand>
</feature>
<feature type="binding site" evidence="1">
    <location>
        <position position="837"/>
    </location>
    <ligand>
        <name>Mg(2+)</name>
        <dbReference type="ChEBI" id="CHEBI:18420"/>
        <label>4</label>
    </ligand>
</feature>
<feature type="binding site" evidence="1">
    <location>
        <position position="837"/>
    </location>
    <ligand>
        <name>Mn(2+)</name>
        <dbReference type="ChEBI" id="CHEBI:29035"/>
        <label>4</label>
    </ligand>
</feature>
<comment type="function">
    <text evidence="1">Large subunit of the glutamine-dependent carbamoyl phosphate synthetase (CPSase). CPSase catalyzes the formation of carbamoyl phosphate from the ammonia moiety of glutamine, carbonate, and phosphate donated by ATP, constituting the first step of 2 biosynthetic pathways, one leading to arginine and/or urea and the other to pyrimidine nucleotides. The large subunit (synthetase) binds the substrates ammonia (free or transferred from glutamine from the small subunit), hydrogencarbonate and ATP and carries out an ATP-coupled ligase reaction, activating hydrogencarbonate by forming carboxy phosphate which reacts with ammonia to form carbamoyl phosphate.</text>
</comment>
<comment type="catalytic activity">
    <reaction evidence="1">
        <text>hydrogencarbonate + L-glutamine + 2 ATP + H2O = carbamoyl phosphate + L-glutamate + 2 ADP + phosphate + 2 H(+)</text>
        <dbReference type="Rhea" id="RHEA:18633"/>
        <dbReference type="ChEBI" id="CHEBI:15377"/>
        <dbReference type="ChEBI" id="CHEBI:15378"/>
        <dbReference type="ChEBI" id="CHEBI:17544"/>
        <dbReference type="ChEBI" id="CHEBI:29985"/>
        <dbReference type="ChEBI" id="CHEBI:30616"/>
        <dbReference type="ChEBI" id="CHEBI:43474"/>
        <dbReference type="ChEBI" id="CHEBI:58228"/>
        <dbReference type="ChEBI" id="CHEBI:58359"/>
        <dbReference type="ChEBI" id="CHEBI:456216"/>
        <dbReference type="EC" id="6.3.5.5"/>
    </reaction>
</comment>
<comment type="catalytic activity">
    <molecule>Carbamoyl phosphate synthase large chain</molecule>
    <reaction evidence="1">
        <text>hydrogencarbonate + NH4(+) + 2 ATP = carbamoyl phosphate + 2 ADP + phosphate + 2 H(+)</text>
        <dbReference type="Rhea" id="RHEA:18029"/>
        <dbReference type="ChEBI" id="CHEBI:15378"/>
        <dbReference type="ChEBI" id="CHEBI:17544"/>
        <dbReference type="ChEBI" id="CHEBI:28938"/>
        <dbReference type="ChEBI" id="CHEBI:30616"/>
        <dbReference type="ChEBI" id="CHEBI:43474"/>
        <dbReference type="ChEBI" id="CHEBI:58228"/>
        <dbReference type="ChEBI" id="CHEBI:456216"/>
        <dbReference type="EC" id="6.3.4.16"/>
    </reaction>
</comment>
<comment type="cofactor">
    <cofactor evidence="1">
        <name>Mg(2+)</name>
        <dbReference type="ChEBI" id="CHEBI:18420"/>
    </cofactor>
    <cofactor evidence="1">
        <name>Mn(2+)</name>
        <dbReference type="ChEBI" id="CHEBI:29035"/>
    </cofactor>
    <text evidence="1">Binds 4 Mg(2+) or Mn(2+) ions per subunit.</text>
</comment>
<comment type="pathway">
    <text evidence="1">Amino-acid biosynthesis; L-arginine biosynthesis; carbamoyl phosphate from bicarbonate: step 1/1.</text>
</comment>
<comment type="pathway">
    <text evidence="1">Pyrimidine metabolism; UMP biosynthesis via de novo pathway; (S)-dihydroorotate from bicarbonate: step 1/3.</text>
</comment>
<comment type="subunit">
    <text evidence="1">Composed of two chains; the small (or glutamine) chain promotes the hydrolysis of glutamine to ammonia, which is used by the large (or ammonia) chain to synthesize carbamoyl phosphate. Tetramer of heterodimers (alpha,beta)4.</text>
</comment>
<comment type="domain">
    <text evidence="1">The large subunit is composed of 2 ATP-grasp domains that are involved in binding the 2 ATP molecules needed for carbamoyl phosphate synthesis. The N-terminal ATP-grasp domain (referred to as the carboxyphosphate synthetic component) catalyzes the ATP-dependent phosphorylation of hydrogencarbonate to carboxyphosphate and the subsequent nucleophilic attack by ammonia to form a carbamate intermediate. The C-terminal ATP-grasp domain (referred to as the carbamoyl phosphate synthetic component) then catalyzes the phosphorylation of carbamate with the second ATP to form the end product carbamoyl phosphate. The reactive and unstable enzyme intermediates are sequentially channeled from one active site to the next through the interior of the protein over a distance of at least 96 A.</text>
</comment>
<comment type="similarity">
    <text evidence="1">Belongs to the CarB family.</text>
</comment>
<dbReference type="EC" id="6.3.4.16" evidence="1"/>
<dbReference type="EC" id="6.3.5.5" evidence="1"/>
<dbReference type="EMBL" id="CP000077">
    <property type="protein sequence ID" value="AAY80932.1"/>
    <property type="molecule type" value="Genomic_DNA"/>
</dbReference>
<dbReference type="RefSeq" id="WP_011278434.1">
    <property type="nucleotide sequence ID" value="NC_007181.1"/>
</dbReference>
<dbReference type="SMR" id="Q4J8E8"/>
<dbReference type="STRING" id="330779.Saci_1620"/>
<dbReference type="GeneID" id="14552113"/>
<dbReference type="GeneID" id="78441963"/>
<dbReference type="KEGG" id="sai:Saci_1620"/>
<dbReference type="PATRIC" id="fig|330779.12.peg.1559"/>
<dbReference type="eggNOG" id="arCOG01594">
    <property type="taxonomic scope" value="Archaea"/>
</dbReference>
<dbReference type="HOGENOM" id="CLU_000513_1_3_2"/>
<dbReference type="UniPathway" id="UPA00068">
    <property type="reaction ID" value="UER00171"/>
</dbReference>
<dbReference type="UniPathway" id="UPA00070">
    <property type="reaction ID" value="UER00115"/>
</dbReference>
<dbReference type="Proteomes" id="UP000001018">
    <property type="component" value="Chromosome"/>
</dbReference>
<dbReference type="GO" id="GO:0005737">
    <property type="term" value="C:cytoplasm"/>
    <property type="evidence" value="ECO:0007669"/>
    <property type="project" value="TreeGrafter"/>
</dbReference>
<dbReference type="GO" id="GO:0005524">
    <property type="term" value="F:ATP binding"/>
    <property type="evidence" value="ECO:0007669"/>
    <property type="project" value="UniProtKB-UniRule"/>
</dbReference>
<dbReference type="GO" id="GO:0004087">
    <property type="term" value="F:carbamoyl-phosphate synthase (ammonia) activity"/>
    <property type="evidence" value="ECO:0007669"/>
    <property type="project" value="RHEA"/>
</dbReference>
<dbReference type="GO" id="GO:0004088">
    <property type="term" value="F:carbamoyl-phosphate synthase (glutamine-hydrolyzing) activity"/>
    <property type="evidence" value="ECO:0007669"/>
    <property type="project" value="UniProtKB-UniRule"/>
</dbReference>
<dbReference type="GO" id="GO:0046872">
    <property type="term" value="F:metal ion binding"/>
    <property type="evidence" value="ECO:0007669"/>
    <property type="project" value="UniProtKB-KW"/>
</dbReference>
<dbReference type="GO" id="GO:0044205">
    <property type="term" value="P:'de novo' UMP biosynthetic process"/>
    <property type="evidence" value="ECO:0007669"/>
    <property type="project" value="UniProtKB-UniRule"/>
</dbReference>
<dbReference type="GO" id="GO:0006541">
    <property type="term" value="P:glutamine metabolic process"/>
    <property type="evidence" value="ECO:0007669"/>
    <property type="project" value="TreeGrafter"/>
</dbReference>
<dbReference type="GO" id="GO:0006526">
    <property type="term" value="P:L-arginine biosynthetic process"/>
    <property type="evidence" value="ECO:0007669"/>
    <property type="project" value="UniProtKB-UniRule"/>
</dbReference>
<dbReference type="FunFam" id="1.10.1030.10:FF:000002">
    <property type="entry name" value="Carbamoyl-phosphate synthase large chain"/>
    <property type="match status" value="1"/>
</dbReference>
<dbReference type="FunFam" id="3.30.1490.20:FF:000001">
    <property type="entry name" value="Carbamoyl-phosphate synthase large chain"/>
    <property type="match status" value="1"/>
</dbReference>
<dbReference type="FunFam" id="3.30.470.20:FF:000001">
    <property type="entry name" value="Carbamoyl-phosphate synthase large chain"/>
    <property type="match status" value="1"/>
</dbReference>
<dbReference type="FunFam" id="3.30.470.20:FF:000026">
    <property type="entry name" value="Carbamoyl-phosphate synthase large chain"/>
    <property type="match status" value="1"/>
</dbReference>
<dbReference type="FunFam" id="3.40.50.20:FF:000001">
    <property type="entry name" value="Carbamoyl-phosphate synthase large chain"/>
    <property type="match status" value="2"/>
</dbReference>
<dbReference type="Gene3D" id="3.40.50.20">
    <property type="match status" value="2"/>
</dbReference>
<dbReference type="Gene3D" id="3.30.1490.20">
    <property type="entry name" value="ATP-grasp fold, A domain"/>
    <property type="match status" value="1"/>
</dbReference>
<dbReference type="Gene3D" id="3.30.470.20">
    <property type="entry name" value="ATP-grasp fold, B domain"/>
    <property type="match status" value="2"/>
</dbReference>
<dbReference type="Gene3D" id="1.10.1030.10">
    <property type="entry name" value="Carbamoyl-phosphate synthetase, large subunit oligomerisation domain"/>
    <property type="match status" value="1"/>
</dbReference>
<dbReference type="HAMAP" id="MF_01210_A">
    <property type="entry name" value="CPSase_L_chain_A"/>
    <property type="match status" value="1"/>
</dbReference>
<dbReference type="InterPro" id="IPR011761">
    <property type="entry name" value="ATP-grasp"/>
</dbReference>
<dbReference type="InterPro" id="IPR013815">
    <property type="entry name" value="ATP_grasp_subdomain_1"/>
</dbReference>
<dbReference type="InterPro" id="IPR006275">
    <property type="entry name" value="CarbamoylP_synth_lsu"/>
</dbReference>
<dbReference type="InterPro" id="IPR005480">
    <property type="entry name" value="CarbamoylP_synth_lsu_oligo"/>
</dbReference>
<dbReference type="InterPro" id="IPR036897">
    <property type="entry name" value="CarbamoylP_synth_lsu_oligo_sf"/>
</dbReference>
<dbReference type="InterPro" id="IPR005479">
    <property type="entry name" value="CbamoylP_synth_lsu-like_ATP-bd"/>
</dbReference>
<dbReference type="InterPro" id="IPR005483">
    <property type="entry name" value="CbamoylP_synth_lsu_CPSase_dom"/>
</dbReference>
<dbReference type="InterPro" id="IPR011607">
    <property type="entry name" value="MGS-like_dom"/>
</dbReference>
<dbReference type="InterPro" id="IPR016185">
    <property type="entry name" value="PreATP-grasp_dom_sf"/>
</dbReference>
<dbReference type="NCBIfam" id="TIGR01369">
    <property type="entry name" value="CPSaseII_lrg"/>
    <property type="match status" value="1"/>
</dbReference>
<dbReference type="NCBIfam" id="NF003671">
    <property type="entry name" value="PRK05294.1"/>
    <property type="match status" value="1"/>
</dbReference>
<dbReference type="NCBIfam" id="NF009455">
    <property type="entry name" value="PRK12815.1"/>
    <property type="match status" value="1"/>
</dbReference>
<dbReference type="PANTHER" id="PTHR11405:SF53">
    <property type="entry name" value="CARBAMOYL-PHOSPHATE SYNTHASE [AMMONIA], MITOCHONDRIAL"/>
    <property type="match status" value="1"/>
</dbReference>
<dbReference type="PANTHER" id="PTHR11405">
    <property type="entry name" value="CARBAMOYLTRANSFERASE FAMILY MEMBER"/>
    <property type="match status" value="1"/>
</dbReference>
<dbReference type="Pfam" id="PF02786">
    <property type="entry name" value="CPSase_L_D2"/>
    <property type="match status" value="2"/>
</dbReference>
<dbReference type="Pfam" id="PF02787">
    <property type="entry name" value="CPSase_L_D3"/>
    <property type="match status" value="1"/>
</dbReference>
<dbReference type="PRINTS" id="PR00098">
    <property type="entry name" value="CPSASE"/>
</dbReference>
<dbReference type="SMART" id="SM01096">
    <property type="entry name" value="CPSase_L_D3"/>
    <property type="match status" value="1"/>
</dbReference>
<dbReference type="SUPFAM" id="SSF48108">
    <property type="entry name" value="Carbamoyl phosphate synthetase, large subunit connection domain"/>
    <property type="match status" value="1"/>
</dbReference>
<dbReference type="SUPFAM" id="SSF56059">
    <property type="entry name" value="Glutathione synthetase ATP-binding domain-like"/>
    <property type="match status" value="2"/>
</dbReference>
<dbReference type="SUPFAM" id="SSF52440">
    <property type="entry name" value="PreATP-grasp domain"/>
    <property type="match status" value="2"/>
</dbReference>
<dbReference type="PROSITE" id="PS50975">
    <property type="entry name" value="ATP_GRASP"/>
    <property type="match status" value="2"/>
</dbReference>
<dbReference type="PROSITE" id="PS00866">
    <property type="entry name" value="CPSASE_1"/>
    <property type="match status" value="1"/>
</dbReference>
<dbReference type="PROSITE" id="PS00867">
    <property type="entry name" value="CPSASE_2"/>
    <property type="match status" value="1"/>
</dbReference>
<dbReference type="PROSITE" id="PS51855">
    <property type="entry name" value="MGS"/>
    <property type="match status" value="1"/>
</dbReference>
<proteinExistence type="inferred from homology"/>
<reference key="1">
    <citation type="journal article" date="2005" name="J. Bacteriol.">
        <title>The genome of Sulfolobus acidocaldarius, a model organism of the Crenarchaeota.</title>
        <authorList>
            <person name="Chen L."/>
            <person name="Bruegger K."/>
            <person name="Skovgaard M."/>
            <person name="Redder P."/>
            <person name="She Q."/>
            <person name="Torarinsson E."/>
            <person name="Greve B."/>
            <person name="Awayez M."/>
            <person name="Zibat A."/>
            <person name="Klenk H.-P."/>
            <person name="Garrett R.A."/>
        </authorList>
    </citation>
    <scope>NUCLEOTIDE SEQUENCE [LARGE SCALE GENOMIC DNA]</scope>
    <source>
        <strain>ATCC 33909 / DSM 639 / JCM 8929 / NBRC 15157 / NCIMB 11770</strain>
    </source>
</reference>
<gene>
    <name evidence="1" type="primary">carB</name>
    <name type="ordered locus">Saci_1620</name>
</gene>
<name>CARB_SULAC</name>
<accession>Q4J8E8</accession>
<sequence length="1052" mass="117680">MRENVKRVLVIGSGPIKIAEAAEFDYSGSQALKALKEEGIETILVNSNVATVQTSRKFADKLYMIPVTWWTVERVIEKERPDAIMIGFGGQTALNVGVDLYKKEILKKYGVKVLGTPIEGIERALSREKFRETMINVNLPVPPSLSARSEEEALEKARQIGYPVMVRVSFNLGGRGSTVAWSEEDLKRDIGRALSQSYIHEVLIEKYLHHWIELEYEVMRDKHGNSAVIACIENLDPMGVHTGESTVIAPCQTLDNKEFQDMRSMSIDVAKSIDLVGECNVQFALNPLAYEYYIIETNPRMSRSSALASKATGYPLAYVSAKLALGYELYEVLNKVSGSTCACFEPSLDYVVIKIPRWDLDKFENVEHSLATEMKSVGEVMSIGRSFEEALQKAVRMLDLGEPGIIGGKVYNSKMTKIDSLRMLKERRPYWFLYASKAFKEGATIDEVYEVTGINKFFLNKIKNLVDFYESIKNNKGLDQKTLSIAKRLGFSDYQIASAVGLSEKDIRELRQKYGIEPKVKQIDTLAGEWPAVTNYLYVTYNGTEDDIEFSNGIRKLLIVGAGGFRIGVSVEFDWGVVSLLDSASKYFDEVTIINYNPETVSTDWDIARKLYFDEISVERILDLVRKEKFNYVATFAGGQIGNTISKKLEENGVKLLGTSGHSVDIAEDREKFSRLLDKLGIKQPDWISARSIEEVRKFVEMVGYPVLVRPSYVLSGSAMRIVYNDTELVSYIKKATEISSEHPVVVSKYIDNAIEAEIDGASDGRGVYGVVLEHVEEAGVHSGDATISIPFKKLSPETVHKMKESIHSISRELNIKGPFNVQFVVKNGTPYIIEMNLRASRSMPFSSKVVGKNIIDLALTGVIKGFDFDEFVELKAKSWGVKSAQFSWAQLKGAYPFLGPEMRSTGEAASLGVDFYDALLKSWLSSSPNRLPDQKGIALVYGRSNVEYLQASARNLSEYGMTVYTLSDAPIYGYEVTSSGKSVELIKDRKVEIVVTDGYLKSLDYEVRRIAVDYNVPIILNGRLGEELTKAFLLRKSNMTFYEIGEYGAGI</sequence>